<organism>
    <name type="scientific">Salmonella newport (strain SL254)</name>
    <dbReference type="NCBI Taxonomy" id="423368"/>
    <lineage>
        <taxon>Bacteria</taxon>
        <taxon>Pseudomonadati</taxon>
        <taxon>Pseudomonadota</taxon>
        <taxon>Gammaproteobacteria</taxon>
        <taxon>Enterobacterales</taxon>
        <taxon>Enterobacteriaceae</taxon>
        <taxon>Salmonella</taxon>
    </lineage>
</organism>
<keyword id="KW-0067">ATP-binding</keyword>
<keyword id="KW-0119">Carbohydrate metabolism</keyword>
<keyword id="KW-0418">Kinase</keyword>
<keyword id="KW-0479">Metal-binding</keyword>
<keyword id="KW-0547">Nucleotide-binding</keyword>
<keyword id="KW-0808">Transferase</keyword>
<keyword id="KW-0862">Zinc</keyword>
<sequence length="291" mass="30122">MTTLAIDIGGTKLAAALIDKNLRISQRRELPTPASKTPDALREALKALVEPLRAEARQVAIASTGIIQEGMLLALNPHNLGGLLHFPLVQTLETIAGLPTLAVNDAQAAAWAEYHALPDDIRDMVFITVSTGVGGGVVCDGKLLTGKGGLAGHLGHTLADPHGPVCGCGRVGCVEAIASGRGMAAAARDDLAGCDAKTLFIRAGEGHQQARHLVSQSAQVIARMIADVKATTDCQCVVIGGSVGLAEGYLEQVRAFLMQEPAPYHVALSAARYRHDAGLLGAALLAQGDTL</sequence>
<protein>
    <recommendedName>
        <fullName evidence="1">N-acetylmannosamine kinase</fullName>
        <ecNumber evidence="1">2.7.1.60</ecNumber>
    </recommendedName>
    <alternativeName>
        <fullName evidence="1">ManNAc kinase</fullName>
    </alternativeName>
    <alternativeName>
        <fullName evidence="1">N-acetyl-D-mannosamine kinase</fullName>
    </alternativeName>
</protein>
<reference key="1">
    <citation type="journal article" date="2011" name="J. Bacteriol.">
        <title>Comparative genomics of 28 Salmonella enterica isolates: evidence for CRISPR-mediated adaptive sublineage evolution.</title>
        <authorList>
            <person name="Fricke W.F."/>
            <person name="Mammel M.K."/>
            <person name="McDermott P.F."/>
            <person name="Tartera C."/>
            <person name="White D.G."/>
            <person name="Leclerc J.E."/>
            <person name="Ravel J."/>
            <person name="Cebula T.A."/>
        </authorList>
    </citation>
    <scope>NUCLEOTIDE SEQUENCE [LARGE SCALE GENOMIC DNA]</scope>
    <source>
        <strain>SL254</strain>
    </source>
</reference>
<evidence type="ECO:0000255" key="1">
    <source>
        <dbReference type="HAMAP-Rule" id="MF_01234"/>
    </source>
</evidence>
<dbReference type="EC" id="2.7.1.60" evidence="1"/>
<dbReference type="EMBL" id="CP001113">
    <property type="protein sequence ID" value="ACF61505.1"/>
    <property type="molecule type" value="Genomic_DNA"/>
</dbReference>
<dbReference type="RefSeq" id="WP_000208970.1">
    <property type="nucleotide sequence ID" value="NZ_CCMR01000001.1"/>
</dbReference>
<dbReference type="SMR" id="B4T747"/>
<dbReference type="KEGG" id="see:SNSL254_A3599"/>
<dbReference type="HOGENOM" id="CLU_036604_0_4_6"/>
<dbReference type="UniPathway" id="UPA00629">
    <property type="reaction ID" value="UER00681"/>
</dbReference>
<dbReference type="Proteomes" id="UP000008824">
    <property type="component" value="Chromosome"/>
</dbReference>
<dbReference type="GO" id="GO:0005524">
    <property type="term" value="F:ATP binding"/>
    <property type="evidence" value="ECO:0007669"/>
    <property type="project" value="UniProtKB-UniRule"/>
</dbReference>
<dbReference type="GO" id="GO:0009384">
    <property type="term" value="F:N-acylmannosamine kinase activity"/>
    <property type="evidence" value="ECO:0007669"/>
    <property type="project" value="UniProtKB-UniRule"/>
</dbReference>
<dbReference type="GO" id="GO:0008270">
    <property type="term" value="F:zinc ion binding"/>
    <property type="evidence" value="ECO:0007669"/>
    <property type="project" value="UniProtKB-UniRule"/>
</dbReference>
<dbReference type="GO" id="GO:0019262">
    <property type="term" value="P:N-acetylneuraminate catabolic process"/>
    <property type="evidence" value="ECO:0007669"/>
    <property type="project" value="UniProtKB-UniRule"/>
</dbReference>
<dbReference type="FunFam" id="3.30.420.40:FF:000062">
    <property type="entry name" value="N-acetylmannosamine kinase"/>
    <property type="match status" value="1"/>
</dbReference>
<dbReference type="FunFam" id="3.30.420.40:FF:000063">
    <property type="entry name" value="N-acetylmannosamine kinase"/>
    <property type="match status" value="1"/>
</dbReference>
<dbReference type="Gene3D" id="3.30.420.40">
    <property type="match status" value="2"/>
</dbReference>
<dbReference type="HAMAP" id="MF_01234">
    <property type="entry name" value="ManNAc_kinase"/>
    <property type="match status" value="1"/>
</dbReference>
<dbReference type="InterPro" id="IPR043129">
    <property type="entry name" value="ATPase_NBD"/>
</dbReference>
<dbReference type="InterPro" id="IPR023945">
    <property type="entry name" value="ManNAc_kinase_bac"/>
</dbReference>
<dbReference type="InterPro" id="IPR000600">
    <property type="entry name" value="ROK"/>
</dbReference>
<dbReference type="InterPro" id="IPR049874">
    <property type="entry name" value="ROK_cs"/>
</dbReference>
<dbReference type="NCBIfam" id="NF047821">
    <property type="entry name" value="NactlManKinNanK"/>
    <property type="match status" value="1"/>
</dbReference>
<dbReference type="NCBIfam" id="NF003461">
    <property type="entry name" value="PRK05082.1"/>
    <property type="match status" value="1"/>
</dbReference>
<dbReference type="PANTHER" id="PTHR18964:SF169">
    <property type="entry name" value="N-ACETYLMANNOSAMINE KINASE"/>
    <property type="match status" value="1"/>
</dbReference>
<dbReference type="PANTHER" id="PTHR18964">
    <property type="entry name" value="ROK (REPRESSOR, ORF, KINASE) FAMILY"/>
    <property type="match status" value="1"/>
</dbReference>
<dbReference type="Pfam" id="PF00480">
    <property type="entry name" value="ROK"/>
    <property type="match status" value="1"/>
</dbReference>
<dbReference type="SUPFAM" id="SSF53067">
    <property type="entry name" value="Actin-like ATPase domain"/>
    <property type="match status" value="1"/>
</dbReference>
<dbReference type="PROSITE" id="PS01125">
    <property type="entry name" value="ROK"/>
    <property type="match status" value="1"/>
</dbReference>
<proteinExistence type="inferred from homology"/>
<accession>B4T747</accession>
<gene>
    <name evidence="1" type="primary">nanK</name>
    <name type="ordered locus">SNSL254_A3599</name>
</gene>
<feature type="chain" id="PRO_1000139693" description="N-acetylmannosamine kinase">
    <location>
        <begin position="1"/>
        <end position="291"/>
    </location>
</feature>
<feature type="binding site" evidence="1">
    <location>
        <begin position="5"/>
        <end position="12"/>
    </location>
    <ligand>
        <name>ATP</name>
        <dbReference type="ChEBI" id="CHEBI:30616"/>
    </ligand>
</feature>
<feature type="binding site" evidence="1">
    <location>
        <begin position="132"/>
        <end position="139"/>
    </location>
    <ligand>
        <name>ATP</name>
        <dbReference type="ChEBI" id="CHEBI:30616"/>
    </ligand>
</feature>
<feature type="binding site" evidence="1">
    <location>
        <position position="156"/>
    </location>
    <ligand>
        <name>Zn(2+)</name>
        <dbReference type="ChEBI" id="CHEBI:29105"/>
    </ligand>
</feature>
<feature type="binding site" evidence="1">
    <location>
        <position position="166"/>
    </location>
    <ligand>
        <name>Zn(2+)</name>
        <dbReference type="ChEBI" id="CHEBI:29105"/>
    </ligand>
</feature>
<feature type="binding site" evidence="1">
    <location>
        <position position="168"/>
    </location>
    <ligand>
        <name>Zn(2+)</name>
        <dbReference type="ChEBI" id="CHEBI:29105"/>
    </ligand>
</feature>
<feature type="binding site" evidence="1">
    <location>
        <position position="173"/>
    </location>
    <ligand>
        <name>Zn(2+)</name>
        <dbReference type="ChEBI" id="CHEBI:29105"/>
    </ligand>
</feature>
<comment type="function">
    <text evidence="1">Catalyzes the phosphorylation of N-acetylmannosamine (ManNAc) to ManNAc-6-P.</text>
</comment>
<comment type="catalytic activity">
    <reaction evidence="1">
        <text>an N-acyl-D-mannosamine + ATP = an N-acyl-D-mannosamine 6-phosphate + ADP + H(+)</text>
        <dbReference type="Rhea" id="RHEA:23832"/>
        <dbReference type="ChEBI" id="CHEBI:15378"/>
        <dbReference type="ChEBI" id="CHEBI:16062"/>
        <dbReference type="ChEBI" id="CHEBI:30616"/>
        <dbReference type="ChEBI" id="CHEBI:57666"/>
        <dbReference type="ChEBI" id="CHEBI:456216"/>
        <dbReference type="EC" id="2.7.1.60"/>
    </reaction>
</comment>
<comment type="pathway">
    <text evidence="1">Amino-sugar metabolism; N-acetylneuraminate degradation; D-fructose 6-phosphate from N-acetylneuraminate: step 2/5.</text>
</comment>
<comment type="subunit">
    <text evidence="1">Homodimer.</text>
</comment>
<comment type="similarity">
    <text evidence="1">Belongs to the ROK (NagC/XylR) family. NanK subfamily.</text>
</comment>
<name>NANK_SALNS</name>